<protein>
    <recommendedName>
        <fullName evidence="1">Small ribosomal subunit protein bS21</fullName>
    </recommendedName>
    <alternativeName>
        <fullName evidence="2">30S ribosomal protein S21</fullName>
    </alternativeName>
</protein>
<name>RS21_ACIET</name>
<reference key="1">
    <citation type="submission" date="2009-01" db="EMBL/GenBank/DDBJ databases">
        <title>Complete sequence of Diaphorobacter sp. TPSY.</title>
        <authorList>
            <consortium name="US DOE Joint Genome Institute"/>
            <person name="Lucas S."/>
            <person name="Copeland A."/>
            <person name="Lapidus A."/>
            <person name="Glavina del Rio T."/>
            <person name="Tice H."/>
            <person name="Bruce D."/>
            <person name="Goodwin L."/>
            <person name="Pitluck S."/>
            <person name="Chertkov O."/>
            <person name="Brettin T."/>
            <person name="Detter J.C."/>
            <person name="Han C."/>
            <person name="Larimer F."/>
            <person name="Land M."/>
            <person name="Hauser L."/>
            <person name="Kyrpides N."/>
            <person name="Mikhailova N."/>
            <person name="Coates J.D."/>
        </authorList>
    </citation>
    <scope>NUCLEOTIDE SEQUENCE [LARGE SCALE GENOMIC DNA]</scope>
    <source>
        <strain>TPSY</strain>
    </source>
</reference>
<accession>B9MC79</accession>
<dbReference type="EMBL" id="CP001392">
    <property type="protein sequence ID" value="ACM33784.1"/>
    <property type="molecule type" value="Genomic_DNA"/>
</dbReference>
<dbReference type="RefSeq" id="WP_007833691.1">
    <property type="nucleotide sequence ID" value="NC_011992.1"/>
</dbReference>
<dbReference type="SMR" id="B9MC79"/>
<dbReference type="GeneID" id="92351961"/>
<dbReference type="KEGG" id="dia:Dtpsy_2347"/>
<dbReference type="eggNOG" id="COG0828">
    <property type="taxonomic scope" value="Bacteria"/>
</dbReference>
<dbReference type="HOGENOM" id="CLU_159258_1_2_4"/>
<dbReference type="Proteomes" id="UP000000450">
    <property type="component" value="Chromosome"/>
</dbReference>
<dbReference type="GO" id="GO:1990904">
    <property type="term" value="C:ribonucleoprotein complex"/>
    <property type="evidence" value="ECO:0007669"/>
    <property type="project" value="UniProtKB-KW"/>
</dbReference>
<dbReference type="GO" id="GO:0005840">
    <property type="term" value="C:ribosome"/>
    <property type="evidence" value="ECO:0007669"/>
    <property type="project" value="UniProtKB-KW"/>
</dbReference>
<dbReference type="GO" id="GO:0003735">
    <property type="term" value="F:structural constituent of ribosome"/>
    <property type="evidence" value="ECO:0007669"/>
    <property type="project" value="InterPro"/>
</dbReference>
<dbReference type="GO" id="GO:0006412">
    <property type="term" value="P:translation"/>
    <property type="evidence" value="ECO:0007669"/>
    <property type="project" value="UniProtKB-UniRule"/>
</dbReference>
<dbReference type="Gene3D" id="1.20.5.1150">
    <property type="entry name" value="Ribosomal protein S8"/>
    <property type="match status" value="1"/>
</dbReference>
<dbReference type="HAMAP" id="MF_00358">
    <property type="entry name" value="Ribosomal_bS21"/>
    <property type="match status" value="1"/>
</dbReference>
<dbReference type="InterPro" id="IPR001911">
    <property type="entry name" value="Ribosomal_bS21"/>
</dbReference>
<dbReference type="InterPro" id="IPR018278">
    <property type="entry name" value="Ribosomal_bS21_CS"/>
</dbReference>
<dbReference type="InterPro" id="IPR038380">
    <property type="entry name" value="Ribosomal_bS21_sf"/>
</dbReference>
<dbReference type="NCBIfam" id="TIGR00030">
    <property type="entry name" value="S21p"/>
    <property type="match status" value="1"/>
</dbReference>
<dbReference type="PANTHER" id="PTHR21109">
    <property type="entry name" value="MITOCHONDRIAL 28S RIBOSOMAL PROTEIN S21"/>
    <property type="match status" value="1"/>
</dbReference>
<dbReference type="PANTHER" id="PTHR21109:SF22">
    <property type="entry name" value="SMALL RIBOSOMAL SUBUNIT PROTEIN BS21"/>
    <property type="match status" value="1"/>
</dbReference>
<dbReference type="Pfam" id="PF01165">
    <property type="entry name" value="Ribosomal_S21"/>
    <property type="match status" value="1"/>
</dbReference>
<dbReference type="PRINTS" id="PR00976">
    <property type="entry name" value="RIBOSOMALS21"/>
</dbReference>
<dbReference type="PROSITE" id="PS01181">
    <property type="entry name" value="RIBOSOMAL_S21"/>
    <property type="match status" value="1"/>
</dbReference>
<keyword id="KW-1185">Reference proteome</keyword>
<keyword id="KW-0687">Ribonucleoprotein</keyword>
<keyword id="KW-0689">Ribosomal protein</keyword>
<proteinExistence type="inferred from homology"/>
<evidence type="ECO:0000255" key="1">
    <source>
        <dbReference type="HAMAP-Rule" id="MF_00358"/>
    </source>
</evidence>
<evidence type="ECO:0000305" key="2"/>
<gene>
    <name evidence="1" type="primary">rpsU</name>
    <name type="ordered locus">Dtpsy_2347</name>
</gene>
<organism>
    <name type="scientific">Acidovorax ebreus (strain TPSY)</name>
    <name type="common">Diaphorobacter sp. (strain TPSY)</name>
    <dbReference type="NCBI Taxonomy" id="535289"/>
    <lineage>
        <taxon>Bacteria</taxon>
        <taxon>Pseudomonadati</taxon>
        <taxon>Pseudomonadota</taxon>
        <taxon>Betaproteobacteria</taxon>
        <taxon>Burkholderiales</taxon>
        <taxon>Comamonadaceae</taxon>
        <taxon>Diaphorobacter</taxon>
    </lineage>
</organism>
<comment type="similarity">
    <text evidence="1">Belongs to the bacterial ribosomal protein bS21 family.</text>
</comment>
<sequence>MTTIRVKENEPFDVALRRFKRTIEKLGLLTDLRAREFYEKPTAERKRKKAAAVKRHYKRVRSMQLPKKLY</sequence>
<feature type="chain" id="PRO_1000194290" description="Small ribosomal subunit protein bS21">
    <location>
        <begin position="1"/>
        <end position="70"/>
    </location>
</feature>